<proteinExistence type="inferred from homology"/>
<protein>
    <recommendedName>
        <fullName>Gastrula zinc finger protein XlCGF67.1</fullName>
    </recommendedName>
</protein>
<dbReference type="PIR" id="S06583">
    <property type="entry name" value="S06583"/>
</dbReference>
<dbReference type="SMR" id="P18734"/>
<dbReference type="Proteomes" id="UP000186698">
    <property type="component" value="Unplaced"/>
</dbReference>
<dbReference type="GO" id="GO:0005634">
    <property type="term" value="C:nucleus"/>
    <property type="evidence" value="ECO:0007669"/>
    <property type="project" value="UniProtKB-SubCell"/>
</dbReference>
<dbReference type="GO" id="GO:0000981">
    <property type="term" value="F:DNA-binding transcription factor activity, RNA polymerase II-specific"/>
    <property type="evidence" value="ECO:0007669"/>
    <property type="project" value="TreeGrafter"/>
</dbReference>
<dbReference type="GO" id="GO:0000978">
    <property type="term" value="F:RNA polymerase II cis-regulatory region sequence-specific DNA binding"/>
    <property type="evidence" value="ECO:0007669"/>
    <property type="project" value="TreeGrafter"/>
</dbReference>
<dbReference type="GO" id="GO:0008270">
    <property type="term" value="F:zinc ion binding"/>
    <property type="evidence" value="ECO:0007669"/>
    <property type="project" value="UniProtKB-KW"/>
</dbReference>
<dbReference type="FunFam" id="3.30.160.60:FF:000383">
    <property type="entry name" value="Uncharacterized protein"/>
    <property type="match status" value="1"/>
</dbReference>
<dbReference type="FunFam" id="3.30.160.60:FF:002005">
    <property type="entry name" value="Zinc finger protein 200"/>
    <property type="match status" value="1"/>
</dbReference>
<dbReference type="FunFam" id="3.30.160.60:FF:000812">
    <property type="entry name" value="zinc finger protein 23 isoform X2"/>
    <property type="match status" value="1"/>
</dbReference>
<dbReference type="FunFam" id="3.30.160.60:FF:002090">
    <property type="entry name" value="Zinc finger protein 473"/>
    <property type="match status" value="1"/>
</dbReference>
<dbReference type="FunFam" id="3.30.160.60:FF:001224">
    <property type="entry name" value="zinc finger protein 771-like"/>
    <property type="match status" value="1"/>
</dbReference>
<dbReference type="Gene3D" id="3.30.160.60">
    <property type="entry name" value="Classic Zinc Finger"/>
    <property type="match status" value="5"/>
</dbReference>
<dbReference type="InterPro" id="IPR036236">
    <property type="entry name" value="Znf_C2H2_sf"/>
</dbReference>
<dbReference type="InterPro" id="IPR013087">
    <property type="entry name" value="Znf_C2H2_type"/>
</dbReference>
<dbReference type="PANTHER" id="PTHR23226:SF407">
    <property type="entry name" value="GASTRULA ZINC FINGER PROTEIN XLCGF28.1-LIKE"/>
    <property type="match status" value="1"/>
</dbReference>
<dbReference type="PANTHER" id="PTHR23226">
    <property type="entry name" value="ZINC FINGER AND SCAN DOMAIN-CONTAINING"/>
    <property type="match status" value="1"/>
</dbReference>
<dbReference type="Pfam" id="PF00096">
    <property type="entry name" value="zf-C2H2"/>
    <property type="match status" value="5"/>
</dbReference>
<dbReference type="SMART" id="SM00355">
    <property type="entry name" value="ZnF_C2H2"/>
    <property type="match status" value="5"/>
</dbReference>
<dbReference type="SUPFAM" id="SSF57667">
    <property type="entry name" value="beta-beta-alpha zinc fingers"/>
    <property type="match status" value="3"/>
</dbReference>
<dbReference type="PROSITE" id="PS00028">
    <property type="entry name" value="ZINC_FINGER_C2H2_1"/>
    <property type="match status" value="5"/>
</dbReference>
<dbReference type="PROSITE" id="PS50157">
    <property type="entry name" value="ZINC_FINGER_C2H2_2"/>
    <property type="match status" value="5"/>
</dbReference>
<name>ZG67_XENLA</name>
<organism>
    <name type="scientific">Xenopus laevis</name>
    <name type="common">African clawed frog</name>
    <dbReference type="NCBI Taxonomy" id="8355"/>
    <lineage>
        <taxon>Eukaryota</taxon>
        <taxon>Metazoa</taxon>
        <taxon>Chordata</taxon>
        <taxon>Craniata</taxon>
        <taxon>Vertebrata</taxon>
        <taxon>Euteleostomi</taxon>
        <taxon>Amphibia</taxon>
        <taxon>Batrachia</taxon>
        <taxon>Anura</taxon>
        <taxon>Pipoidea</taxon>
        <taxon>Pipidae</taxon>
        <taxon>Xenopodinae</taxon>
        <taxon>Xenopus</taxon>
        <taxon>Xenopus</taxon>
    </lineage>
</organism>
<sequence length="139" mass="15901">SDRKTVSCPECGKCFTSRTYLNVHKKVHTGQTYSCSECGKSFLSRSHLNTHLRTHTGEKPYSCSECGKCFTSSAILITHKRIHTGERPFSCQECGKSFSYRSVFMEHQKIHTGEKPFSCSDCGKCFRYRSHLKVHSRIH</sequence>
<keyword id="KW-0238">DNA-binding</keyword>
<keyword id="KW-0479">Metal-binding</keyword>
<keyword id="KW-0539">Nucleus</keyword>
<keyword id="KW-1185">Reference proteome</keyword>
<keyword id="KW-0677">Repeat</keyword>
<keyword id="KW-0804">Transcription</keyword>
<keyword id="KW-0805">Transcription regulation</keyword>
<keyword id="KW-0862">Zinc</keyword>
<keyword id="KW-0863">Zinc-finger</keyword>
<evidence type="ECO:0000255" key="1">
    <source>
        <dbReference type="PROSITE-ProRule" id="PRU00042"/>
    </source>
</evidence>
<evidence type="ECO:0000305" key="2"/>
<comment type="function">
    <text>May be involved in transcriptional regulation.</text>
</comment>
<comment type="subcellular location">
    <subcellularLocation>
        <location evidence="2">Nucleus</location>
    </subcellularLocation>
</comment>
<comment type="similarity">
    <text evidence="2">Belongs to the krueppel C2H2-type zinc-finger protein family.</text>
</comment>
<accession>P18734</accession>
<reference key="1">
    <citation type="journal article" date="1989" name="J. Mol. Biol.">
        <title>Second-order repeats in Xenopus laevis finger proteins.</title>
        <authorList>
            <person name="Nietfeld W."/>
            <person name="El-Baradi T."/>
            <person name="Mentzel H."/>
            <person name="Pieler T."/>
            <person name="Koester M."/>
            <person name="Poeting A."/>
            <person name="Knoechel W."/>
        </authorList>
    </citation>
    <scope>NUCLEOTIDE SEQUENCE</scope>
</reference>
<feature type="chain" id="PRO_0000047806" description="Gastrula zinc finger protein XlCGF67.1">
    <location>
        <begin position="1" status="less than"/>
        <end position="139" status="greater than"/>
    </location>
</feature>
<feature type="zinc finger region" description="C2H2-type 1" evidence="1">
    <location>
        <begin position="6"/>
        <end position="28"/>
    </location>
</feature>
<feature type="zinc finger region" description="C2H2-type 2" evidence="1">
    <location>
        <begin position="33"/>
        <end position="55"/>
    </location>
</feature>
<feature type="zinc finger region" description="C2H2-type 3" evidence="1">
    <location>
        <begin position="61"/>
        <end position="83"/>
    </location>
</feature>
<feature type="zinc finger region" description="C2H2-type 4" evidence="1">
    <location>
        <begin position="89"/>
        <end position="111"/>
    </location>
</feature>
<feature type="zinc finger region" description="C2H2-type 5" evidence="1">
    <location>
        <begin position="117"/>
        <end position="139"/>
    </location>
</feature>
<feature type="non-terminal residue">
    <location>
        <position position="1"/>
    </location>
</feature>
<feature type="non-terminal residue">
    <location>
        <position position="139"/>
    </location>
</feature>